<keyword id="KW-0004">4Fe-4S</keyword>
<keyword id="KW-0963">Cytoplasm</keyword>
<keyword id="KW-0408">Iron</keyword>
<keyword id="KW-0411">Iron-sulfur</keyword>
<keyword id="KW-0479">Metal-binding</keyword>
<keyword id="KW-0662">Pyridine nucleotide biosynthesis</keyword>
<keyword id="KW-1185">Reference proteome</keyword>
<keyword id="KW-0808">Transferase</keyword>
<organism>
    <name type="scientific">Wigglesworthia glossinidia brevipalpis</name>
    <dbReference type="NCBI Taxonomy" id="36870"/>
    <lineage>
        <taxon>Bacteria</taxon>
        <taxon>Pseudomonadati</taxon>
        <taxon>Pseudomonadota</taxon>
        <taxon>Gammaproteobacteria</taxon>
        <taxon>Enterobacterales</taxon>
        <taxon>Erwiniaceae</taxon>
        <taxon>Wigglesworthia</taxon>
    </lineage>
</organism>
<evidence type="ECO:0000255" key="1">
    <source>
        <dbReference type="HAMAP-Rule" id="MF_00567"/>
    </source>
</evidence>
<dbReference type="EC" id="2.5.1.72" evidence="1"/>
<dbReference type="EMBL" id="BA000021">
    <property type="protein sequence ID" value="BAC24304.1"/>
    <property type="molecule type" value="Genomic_DNA"/>
</dbReference>
<dbReference type="SMR" id="Q8D343"/>
<dbReference type="STRING" id="36870.gene:10368646"/>
<dbReference type="KEGG" id="wbr:nadA"/>
<dbReference type="eggNOG" id="COG0379">
    <property type="taxonomic scope" value="Bacteria"/>
</dbReference>
<dbReference type="HOGENOM" id="CLU_047382_1_0_6"/>
<dbReference type="OrthoDB" id="9801204at2"/>
<dbReference type="UniPathway" id="UPA00253">
    <property type="reaction ID" value="UER00327"/>
</dbReference>
<dbReference type="Proteomes" id="UP000000562">
    <property type="component" value="Chromosome"/>
</dbReference>
<dbReference type="GO" id="GO:0005829">
    <property type="term" value="C:cytosol"/>
    <property type="evidence" value="ECO:0007669"/>
    <property type="project" value="TreeGrafter"/>
</dbReference>
<dbReference type="GO" id="GO:0051539">
    <property type="term" value="F:4 iron, 4 sulfur cluster binding"/>
    <property type="evidence" value="ECO:0007669"/>
    <property type="project" value="UniProtKB-KW"/>
</dbReference>
<dbReference type="GO" id="GO:0046872">
    <property type="term" value="F:metal ion binding"/>
    <property type="evidence" value="ECO:0007669"/>
    <property type="project" value="UniProtKB-KW"/>
</dbReference>
<dbReference type="GO" id="GO:0008987">
    <property type="term" value="F:quinolinate synthetase A activity"/>
    <property type="evidence" value="ECO:0007669"/>
    <property type="project" value="UniProtKB-UniRule"/>
</dbReference>
<dbReference type="GO" id="GO:0034628">
    <property type="term" value="P:'de novo' NAD biosynthetic process from L-aspartate"/>
    <property type="evidence" value="ECO:0007669"/>
    <property type="project" value="TreeGrafter"/>
</dbReference>
<dbReference type="FunFam" id="3.40.50.10800:FF:000001">
    <property type="entry name" value="Quinolinate synthase A"/>
    <property type="match status" value="1"/>
</dbReference>
<dbReference type="FunFam" id="3.40.50.10800:FF:000003">
    <property type="entry name" value="Quinolinate synthase A"/>
    <property type="match status" value="1"/>
</dbReference>
<dbReference type="Gene3D" id="3.40.50.10800">
    <property type="entry name" value="NadA-like"/>
    <property type="match status" value="3"/>
</dbReference>
<dbReference type="HAMAP" id="MF_00567">
    <property type="entry name" value="NadA_type1"/>
    <property type="match status" value="1"/>
</dbReference>
<dbReference type="InterPro" id="IPR003473">
    <property type="entry name" value="NadA"/>
</dbReference>
<dbReference type="InterPro" id="IPR036094">
    <property type="entry name" value="NadA_sf"/>
</dbReference>
<dbReference type="InterPro" id="IPR023513">
    <property type="entry name" value="Quinolinate_synth_A_type1"/>
</dbReference>
<dbReference type="NCBIfam" id="TIGR00550">
    <property type="entry name" value="nadA"/>
    <property type="match status" value="1"/>
</dbReference>
<dbReference type="NCBIfam" id="NF006877">
    <property type="entry name" value="PRK09375.1-1"/>
    <property type="match status" value="1"/>
</dbReference>
<dbReference type="NCBIfam" id="NF006878">
    <property type="entry name" value="PRK09375.1-2"/>
    <property type="match status" value="1"/>
</dbReference>
<dbReference type="PANTHER" id="PTHR30573:SF0">
    <property type="entry name" value="QUINOLINATE SYNTHASE, CHLOROPLASTIC"/>
    <property type="match status" value="1"/>
</dbReference>
<dbReference type="PANTHER" id="PTHR30573">
    <property type="entry name" value="QUINOLINATE SYNTHETASE A"/>
    <property type="match status" value="1"/>
</dbReference>
<dbReference type="Pfam" id="PF02445">
    <property type="entry name" value="NadA"/>
    <property type="match status" value="1"/>
</dbReference>
<dbReference type="SUPFAM" id="SSF142754">
    <property type="entry name" value="NadA-like"/>
    <property type="match status" value="1"/>
</dbReference>
<name>NADA_WIGBR</name>
<gene>
    <name evidence="1" type="primary">nadA</name>
    <name type="ordered locus">WIGBR1580</name>
</gene>
<sequence>MSKKKETDSYLSSDIKKSKDFKIISNLLKINDAVIVSHYYTTPDIQAITEATGGKVADSLEMAKFGKNHKAKTLLVAGVRFMGETAKILNPEKIVLMPTLKAECSLDLSCPEKEFNKFCDNHPDRTIVVYANTSAAIKARAHWIVTSSIAIDLIDYLDRLGEKIIWAPDKHLGRYIQKQTGADILIWNGTCIVHDEFKSQSLLNMKKIYPKSAILAHPESPENVLNLADFIGSTSQLIQAAKSINQKTIIIATDKGIFFKMQQACPDKILIEAPTSGEGLTCLSCARCPWMKMNNINRIIKSLTNKKKHNEINIPHDLQKKALKPLMRMLKFSQKVI</sequence>
<proteinExistence type="inferred from homology"/>
<comment type="function">
    <text evidence="1">Catalyzes the condensation of iminoaspartate with dihydroxyacetone phosphate to form quinolinate.</text>
</comment>
<comment type="catalytic activity">
    <reaction evidence="1">
        <text>iminosuccinate + dihydroxyacetone phosphate = quinolinate + phosphate + 2 H2O + H(+)</text>
        <dbReference type="Rhea" id="RHEA:25888"/>
        <dbReference type="ChEBI" id="CHEBI:15377"/>
        <dbReference type="ChEBI" id="CHEBI:15378"/>
        <dbReference type="ChEBI" id="CHEBI:29959"/>
        <dbReference type="ChEBI" id="CHEBI:43474"/>
        <dbReference type="ChEBI" id="CHEBI:57642"/>
        <dbReference type="ChEBI" id="CHEBI:77875"/>
        <dbReference type="EC" id="2.5.1.72"/>
    </reaction>
    <physiologicalReaction direction="left-to-right" evidence="1">
        <dbReference type="Rhea" id="RHEA:25889"/>
    </physiologicalReaction>
</comment>
<comment type="cofactor">
    <cofactor evidence="1">
        <name>[4Fe-4S] cluster</name>
        <dbReference type="ChEBI" id="CHEBI:49883"/>
    </cofactor>
    <text evidence="1">Binds 1 [4Fe-4S] cluster per subunit.</text>
</comment>
<comment type="pathway">
    <text evidence="1">Cofactor biosynthesis; NAD(+) biosynthesis; quinolinate from iminoaspartate: step 1/1.</text>
</comment>
<comment type="subcellular location">
    <subcellularLocation>
        <location evidence="1">Cytoplasm</location>
    </subcellularLocation>
</comment>
<comment type="similarity">
    <text evidence="1">Belongs to the quinolinate synthase family. Type 1 subfamily.</text>
</comment>
<reference key="1">
    <citation type="journal article" date="2002" name="Nat. Genet.">
        <title>Genome sequence of the endocellular obligate symbiont of tsetse flies, Wigglesworthia glossinidia.</title>
        <authorList>
            <person name="Akman L."/>
            <person name="Yamashita A."/>
            <person name="Watanabe H."/>
            <person name="Oshima K."/>
            <person name="Shiba T."/>
            <person name="Hattori M."/>
            <person name="Aksoy S."/>
        </authorList>
    </citation>
    <scope>NUCLEOTIDE SEQUENCE [LARGE SCALE GENOMIC DNA]</scope>
</reference>
<feature type="chain" id="PRO_0000155777" description="Quinolinate synthase">
    <location>
        <begin position="1"/>
        <end position="337"/>
    </location>
</feature>
<feature type="binding site" evidence="1">
    <location>
        <position position="38"/>
    </location>
    <ligand>
        <name>iminosuccinate</name>
        <dbReference type="ChEBI" id="CHEBI:77875"/>
    </ligand>
</feature>
<feature type="binding site" evidence="1">
    <location>
        <position position="59"/>
    </location>
    <ligand>
        <name>iminosuccinate</name>
        <dbReference type="ChEBI" id="CHEBI:77875"/>
    </ligand>
</feature>
<feature type="binding site" evidence="1">
    <location>
        <position position="104"/>
    </location>
    <ligand>
        <name>[4Fe-4S] cluster</name>
        <dbReference type="ChEBI" id="CHEBI:49883"/>
    </ligand>
</feature>
<feature type="binding site" evidence="1">
    <location>
        <begin position="130"/>
        <end position="132"/>
    </location>
    <ligand>
        <name>iminosuccinate</name>
        <dbReference type="ChEBI" id="CHEBI:77875"/>
    </ligand>
</feature>
<feature type="binding site" evidence="1">
    <location>
        <position position="147"/>
    </location>
    <ligand>
        <name>iminosuccinate</name>
        <dbReference type="ChEBI" id="CHEBI:77875"/>
    </ligand>
</feature>
<feature type="binding site" evidence="1">
    <location>
        <position position="191"/>
    </location>
    <ligand>
        <name>[4Fe-4S] cluster</name>
        <dbReference type="ChEBI" id="CHEBI:49883"/>
    </ligand>
</feature>
<feature type="binding site" evidence="1">
    <location>
        <begin position="217"/>
        <end position="219"/>
    </location>
    <ligand>
        <name>iminosuccinate</name>
        <dbReference type="ChEBI" id="CHEBI:77875"/>
    </ligand>
</feature>
<feature type="binding site" evidence="1">
    <location>
        <position position="234"/>
    </location>
    <ligand>
        <name>iminosuccinate</name>
        <dbReference type="ChEBI" id="CHEBI:77875"/>
    </ligand>
</feature>
<feature type="binding site" evidence="1">
    <location>
        <position position="288"/>
    </location>
    <ligand>
        <name>[4Fe-4S] cluster</name>
        <dbReference type="ChEBI" id="CHEBI:49883"/>
    </ligand>
</feature>
<accession>Q8D343</accession>
<protein>
    <recommendedName>
        <fullName evidence="1">Quinolinate synthase</fullName>
        <ecNumber evidence="1">2.5.1.72</ecNumber>
    </recommendedName>
</protein>